<gene>
    <name evidence="1" type="primary">matK</name>
</gene>
<keyword id="KW-0150">Chloroplast</keyword>
<keyword id="KW-0507">mRNA processing</keyword>
<keyword id="KW-0934">Plastid</keyword>
<keyword id="KW-0694">RNA-binding</keyword>
<keyword id="KW-0819">tRNA processing</keyword>
<sequence>MEEFQRYIELDRSWQHNFFYPLIFQEYIYGFAYDHGLNKSILLENAGDKKYSLLIVKRLINRMYQQTHLIISANHSNQNDFFGHKHKKNLYYQIISEGFAVIVEIPFSLLLISSLEAKEKKIVKSHNLRSIHSIFPFFEDKFLHLNYVLEILIPYPIHLEILVQTLRYWVKDASSLHLLRFFLYEYRNWNSLITPQKSISIFSNQRLFLFLYNFYVCEYESIFVFLCNQSSHLRSTSFGALLERNYFYGKLEYLVKVKTNTKDFCVILWLFKDPFLHYVRYRGKSILASKGTSLLMHKWKYYLFNFWQCHFSLWSPPRRIYINRLSKHSLDFMGFFSSVRLNSSVVRSQMVENSFLIDNPIKKFDTIVRIIPLVGSLAKAKFCNVLGHPISKSVWTDLLDSDIIDRFGRICRNLSHYYSGSSRKKSLYRIKYILRLSCARTLARKHKSTVRAFLKRLGSEFLEEFFTEEEKVLSLILPRDSSISRGLYRGPFWYLDIICIHDLANDE</sequence>
<accession>Q95EA5</accession>
<feature type="chain" id="PRO_0000143293" description="Maturase K">
    <location>
        <begin position="1"/>
        <end position="507"/>
    </location>
</feature>
<reference key="1">
    <citation type="journal article" date="2002" name="Am. J. Bot.">
        <title>Phylogenetic relationships in the cactus family (Cactaceae) based on evidence from trnK/matK and trnL-trnF sequences.</title>
        <authorList>
            <person name="Nyffeler R."/>
        </authorList>
        <dbReference type="AGRICOLA" id="IND23311510"/>
    </citation>
    <scope>NUCLEOTIDE SEQUENCE [GENOMIC DNA]</scope>
    <source>
        <strain>BrwherE238</strain>
    </source>
</reference>
<organism>
    <name type="scientific">Browningia hertlingiana</name>
    <name type="common">Cactus</name>
    <name type="synonym">Azureocereus hertlingianus</name>
    <dbReference type="NCBI Taxonomy" id="153842"/>
    <lineage>
        <taxon>Eukaryota</taxon>
        <taxon>Viridiplantae</taxon>
        <taxon>Streptophyta</taxon>
        <taxon>Embryophyta</taxon>
        <taxon>Tracheophyta</taxon>
        <taxon>Spermatophyta</taxon>
        <taxon>Magnoliopsida</taxon>
        <taxon>eudicotyledons</taxon>
        <taxon>Gunneridae</taxon>
        <taxon>Pentapetalae</taxon>
        <taxon>Caryophyllales</taxon>
        <taxon>Cactineae</taxon>
        <taxon>Cactaceae</taxon>
        <taxon>Cactoideae</taxon>
        <taxon>Browningieae</taxon>
        <taxon>Browningia</taxon>
    </lineage>
</organism>
<name>MATK_BROHE</name>
<comment type="function">
    <text evidence="1">Usually encoded in the trnK tRNA gene intron. Probably assists in splicing its own and other chloroplast group II introns.</text>
</comment>
<comment type="subcellular location">
    <subcellularLocation>
        <location>Plastid</location>
        <location>Chloroplast</location>
    </subcellularLocation>
</comment>
<comment type="similarity">
    <text evidence="1">Belongs to the intron maturase 2 family. MatK subfamily.</text>
</comment>
<evidence type="ECO:0000255" key="1">
    <source>
        <dbReference type="HAMAP-Rule" id="MF_01390"/>
    </source>
</evidence>
<dbReference type="EMBL" id="AY015315">
    <property type="protein sequence ID" value="AAK19802.1"/>
    <property type="molecule type" value="Genomic_DNA"/>
</dbReference>
<dbReference type="GO" id="GO:0009507">
    <property type="term" value="C:chloroplast"/>
    <property type="evidence" value="ECO:0007669"/>
    <property type="project" value="UniProtKB-SubCell"/>
</dbReference>
<dbReference type="GO" id="GO:0003723">
    <property type="term" value="F:RNA binding"/>
    <property type="evidence" value="ECO:0007669"/>
    <property type="project" value="UniProtKB-KW"/>
</dbReference>
<dbReference type="GO" id="GO:0006397">
    <property type="term" value="P:mRNA processing"/>
    <property type="evidence" value="ECO:0007669"/>
    <property type="project" value="UniProtKB-KW"/>
</dbReference>
<dbReference type="GO" id="GO:0008380">
    <property type="term" value="P:RNA splicing"/>
    <property type="evidence" value="ECO:0007669"/>
    <property type="project" value="UniProtKB-UniRule"/>
</dbReference>
<dbReference type="GO" id="GO:0008033">
    <property type="term" value="P:tRNA processing"/>
    <property type="evidence" value="ECO:0007669"/>
    <property type="project" value="UniProtKB-KW"/>
</dbReference>
<dbReference type="HAMAP" id="MF_01390">
    <property type="entry name" value="MatK"/>
    <property type="match status" value="1"/>
</dbReference>
<dbReference type="InterPro" id="IPR024937">
    <property type="entry name" value="Domain_X"/>
</dbReference>
<dbReference type="InterPro" id="IPR002866">
    <property type="entry name" value="Maturase_MatK"/>
</dbReference>
<dbReference type="InterPro" id="IPR024942">
    <property type="entry name" value="Maturase_MatK_N"/>
</dbReference>
<dbReference type="PANTHER" id="PTHR34811">
    <property type="entry name" value="MATURASE K"/>
    <property type="match status" value="1"/>
</dbReference>
<dbReference type="PANTHER" id="PTHR34811:SF1">
    <property type="entry name" value="MATURASE K"/>
    <property type="match status" value="1"/>
</dbReference>
<dbReference type="Pfam" id="PF01348">
    <property type="entry name" value="Intron_maturas2"/>
    <property type="match status" value="1"/>
</dbReference>
<dbReference type="Pfam" id="PF01824">
    <property type="entry name" value="MatK_N"/>
    <property type="match status" value="1"/>
</dbReference>
<proteinExistence type="inferred from homology"/>
<protein>
    <recommendedName>
        <fullName evidence="1">Maturase K</fullName>
    </recommendedName>
    <alternativeName>
        <fullName evidence="1">Intron maturase</fullName>
    </alternativeName>
</protein>
<geneLocation type="chloroplast"/>